<evidence type="ECO:0000250" key="1">
    <source>
        <dbReference type="UniProtKB" id="P01297"/>
    </source>
</evidence>
<evidence type="ECO:0000269" key="2">
    <source>
    </source>
</evidence>
<evidence type="ECO:0000269" key="3">
    <source>
    </source>
</evidence>
<evidence type="ECO:0000269" key="4">
    <source>
    </source>
</evidence>
<evidence type="ECO:0000269" key="5">
    <source>
    </source>
</evidence>
<evidence type="ECO:0000269" key="6">
    <source>
    </source>
</evidence>
<evidence type="ECO:0000305" key="7"/>
<keyword id="KW-0027">Amidation</keyword>
<keyword id="KW-0966">Cell projection</keyword>
<keyword id="KW-0165">Cleavage on pair of basic residues</keyword>
<keyword id="KW-0391">Immunity</keyword>
<keyword id="KW-0399">Innate immunity</keyword>
<keyword id="KW-1185">Reference proteome</keyword>
<keyword id="KW-0964">Secreted</keyword>
<keyword id="KW-0732">Signal</keyword>
<dbReference type="EMBL" id="AK014077">
    <property type="protein sequence ID" value="BAB29144.1"/>
    <property type="molecule type" value="mRNA"/>
</dbReference>
<dbReference type="EMBL" id="AK011929">
    <property type="protein sequence ID" value="BAB27922.1"/>
    <property type="molecule type" value="mRNA"/>
</dbReference>
<dbReference type="EMBL" id="BC028490">
    <property type="protein sequence ID" value="AAH28490.1"/>
    <property type="molecule type" value="mRNA"/>
</dbReference>
<dbReference type="CCDS" id="CCDS21400.1"/>
<dbReference type="RefSeq" id="NP_080799.1">
    <property type="nucleotide sequence ID" value="NM_026523.4"/>
</dbReference>
<dbReference type="FunCoup" id="Q9CR53">
    <property type="interactions" value="404"/>
</dbReference>
<dbReference type="STRING" id="10090.ENSMUSP00000113407"/>
<dbReference type="PhosphoSitePlus" id="Q9CR53"/>
<dbReference type="PaxDb" id="10090-ENSMUSP00000026817"/>
<dbReference type="ProteomicsDB" id="293688"/>
<dbReference type="Antibodypedia" id="43613">
    <property type="antibodies" value="159 antibodies from 26 providers"/>
</dbReference>
<dbReference type="DNASU" id="68039"/>
<dbReference type="Ensembl" id="ENSMUST00000026817.11">
    <property type="protein sequence ID" value="ENSMUSP00000026817.5"/>
    <property type="gene ID" value="ENSMUSG00000025723.13"/>
</dbReference>
<dbReference type="GeneID" id="68039"/>
<dbReference type="KEGG" id="mmu:68039"/>
<dbReference type="UCSC" id="uc009ibm.3">
    <property type="organism name" value="mouse"/>
</dbReference>
<dbReference type="AGR" id="MGI:1915289"/>
<dbReference type="CTD" id="4828"/>
<dbReference type="MGI" id="MGI:1915289">
    <property type="gene designation" value="Nmb"/>
</dbReference>
<dbReference type="VEuPathDB" id="HostDB:ENSMUSG00000025723"/>
<dbReference type="eggNOG" id="ENOG502S66V">
    <property type="taxonomic scope" value="Eukaryota"/>
</dbReference>
<dbReference type="GeneTree" id="ENSGT00940000154470"/>
<dbReference type="HOGENOM" id="CLU_136527_0_0_1"/>
<dbReference type="InParanoid" id="Q9CR53"/>
<dbReference type="OrthoDB" id="9535999at2759"/>
<dbReference type="PhylomeDB" id="Q9CR53"/>
<dbReference type="TreeFam" id="TF336860"/>
<dbReference type="Reactome" id="R-MMU-375276">
    <property type="pathway name" value="Peptide ligand-binding receptors"/>
</dbReference>
<dbReference type="Reactome" id="R-MMU-416476">
    <property type="pathway name" value="G alpha (q) signalling events"/>
</dbReference>
<dbReference type="BioGRID-ORCS" id="68039">
    <property type="hits" value="1 hit in 79 CRISPR screens"/>
</dbReference>
<dbReference type="PRO" id="PR:Q9CR53"/>
<dbReference type="Proteomes" id="UP000000589">
    <property type="component" value="Chromosome 7"/>
</dbReference>
<dbReference type="RNAct" id="Q9CR53">
    <property type="molecule type" value="protein"/>
</dbReference>
<dbReference type="Bgee" id="ENSMUSG00000025723">
    <property type="expression patterns" value="Expressed in lumbar dorsal root ganglion and 137 other cell types or tissues"/>
</dbReference>
<dbReference type="ExpressionAtlas" id="Q9CR53">
    <property type="expression patterns" value="baseline and differential"/>
</dbReference>
<dbReference type="GO" id="GO:0005615">
    <property type="term" value="C:extracellular space"/>
    <property type="evidence" value="ECO:0000314"/>
    <property type="project" value="UniProtKB"/>
</dbReference>
<dbReference type="GO" id="GO:0043005">
    <property type="term" value="C:neuron projection"/>
    <property type="evidence" value="ECO:0000314"/>
    <property type="project" value="UniProtKB"/>
</dbReference>
<dbReference type="GO" id="GO:0140374">
    <property type="term" value="P:antiviral innate immune response"/>
    <property type="evidence" value="ECO:0000314"/>
    <property type="project" value="UniProtKB"/>
</dbReference>
<dbReference type="GO" id="GO:0160024">
    <property type="term" value="P:Leydig cell proliferation"/>
    <property type="evidence" value="ECO:0000250"/>
    <property type="project" value="UniProtKB"/>
</dbReference>
<dbReference type="GO" id="GO:0032715">
    <property type="term" value="P:negative regulation of interleukin-6 production"/>
    <property type="evidence" value="ECO:0000315"/>
    <property type="project" value="UniProtKB"/>
</dbReference>
<dbReference type="GO" id="GO:0007218">
    <property type="term" value="P:neuropeptide signaling pathway"/>
    <property type="evidence" value="ECO:0007669"/>
    <property type="project" value="InterPro"/>
</dbReference>
<dbReference type="GO" id="GO:0032727">
    <property type="term" value="P:positive regulation of interferon-alpha production"/>
    <property type="evidence" value="ECO:0000314"/>
    <property type="project" value="UniProtKB"/>
</dbReference>
<dbReference type="GO" id="GO:0090290">
    <property type="term" value="P:positive regulation of osteoclast proliferation"/>
    <property type="evidence" value="ECO:0000315"/>
    <property type="project" value="UniProtKB"/>
</dbReference>
<dbReference type="GO" id="GO:1903942">
    <property type="term" value="P:positive regulation of respiratory gaseous exchange"/>
    <property type="evidence" value="ECO:0000314"/>
    <property type="project" value="UniProtKB"/>
</dbReference>
<dbReference type="GO" id="GO:2000845">
    <property type="term" value="P:positive regulation of testosterone secretion"/>
    <property type="evidence" value="ECO:0000250"/>
    <property type="project" value="UniProtKB"/>
</dbReference>
<dbReference type="GO" id="GO:0160025">
    <property type="term" value="P:sensory perception of itch"/>
    <property type="evidence" value="ECO:0000314"/>
    <property type="project" value="UniProtKB"/>
</dbReference>
<dbReference type="GO" id="GO:0160023">
    <property type="term" value="P:sneeze reflex"/>
    <property type="evidence" value="ECO:0000315"/>
    <property type="project" value="UniProtKB"/>
</dbReference>
<dbReference type="InterPro" id="IPR000874">
    <property type="entry name" value="Bombesin"/>
</dbReference>
<dbReference type="PANTHER" id="PTHR16866">
    <property type="entry name" value="GASTRIN-RELEASING PEPTIDE"/>
    <property type="match status" value="1"/>
</dbReference>
<dbReference type="PANTHER" id="PTHR16866:SF3">
    <property type="entry name" value="NEUROMEDIN-B"/>
    <property type="match status" value="1"/>
</dbReference>
<dbReference type="Pfam" id="PF02044">
    <property type="entry name" value="Bombesin"/>
    <property type="match status" value="1"/>
</dbReference>
<dbReference type="PROSITE" id="PS00257">
    <property type="entry name" value="BOMBESIN"/>
    <property type="match status" value="1"/>
</dbReference>
<accession>Q9CR53</accession>
<proteinExistence type="evidence at protein level"/>
<reference key="1">
    <citation type="journal article" date="2005" name="Science">
        <title>The transcriptional landscape of the mammalian genome.</title>
        <authorList>
            <person name="Carninci P."/>
            <person name="Kasukawa T."/>
            <person name="Katayama S."/>
            <person name="Gough J."/>
            <person name="Frith M.C."/>
            <person name="Maeda N."/>
            <person name="Oyama R."/>
            <person name="Ravasi T."/>
            <person name="Lenhard B."/>
            <person name="Wells C."/>
            <person name="Kodzius R."/>
            <person name="Shimokawa K."/>
            <person name="Bajic V.B."/>
            <person name="Brenner S.E."/>
            <person name="Batalov S."/>
            <person name="Forrest A.R."/>
            <person name="Zavolan M."/>
            <person name="Davis M.J."/>
            <person name="Wilming L.G."/>
            <person name="Aidinis V."/>
            <person name="Allen J.E."/>
            <person name="Ambesi-Impiombato A."/>
            <person name="Apweiler R."/>
            <person name="Aturaliya R.N."/>
            <person name="Bailey T.L."/>
            <person name="Bansal M."/>
            <person name="Baxter L."/>
            <person name="Beisel K.W."/>
            <person name="Bersano T."/>
            <person name="Bono H."/>
            <person name="Chalk A.M."/>
            <person name="Chiu K.P."/>
            <person name="Choudhary V."/>
            <person name="Christoffels A."/>
            <person name="Clutterbuck D.R."/>
            <person name="Crowe M.L."/>
            <person name="Dalla E."/>
            <person name="Dalrymple B.P."/>
            <person name="de Bono B."/>
            <person name="Della Gatta G."/>
            <person name="di Bernardo D."/>
            <person name="Down T."/>
            <person name="Engstrom P."/>
            <person name="Fagiolini M."/>
            <person name="Faulkner G."/>
            <person name="Fletcher C.F."/>
            <person name="Fukushima T."/>
            <person name="Furuno M."/>
            <person name="Futaki S."/>
            <person name="Gariboldi M."/>
            <person name="Georgii-Hemming P."/>
            <person name="Gingeras T.R."/>
            <person name="Gojobori T."/>
            <person name="Green R.E."/>
            <person name="Gustincich S."/>
            <person name="Harbers M."/>
            <person name="Hayashi Y."/>
            <person name="Hensch T.K."/>
            <person name="Hirokawa N."/>
            <person name="Hill D."/>
            <person name="Huminiecki L."/>
            <person name="Iacono M."/>
            <person name="Ikeo K."/>
            <person name="Iwama A."/>
            <person name="Ishikawa T."/>
            <person name="Jakt M."/>
            <person name="Kanapin A."/>
            <person name="Katoh M."/>
            <person name="Kawasawa Y."/>
            <person name="Kelso J."/>
            <person name="Kitamura H."/>
            <person name="Kitano H."/>
            <person name="Kollias G."/>
            <person name="Krishnan S.P."/>
            <person name="Kruger A."/>
            <person name="Kummerfeld S.K."/>
            <person name="Kurochkin I.V."/>
            <person name="Lareau L.F."/>
            <person name="Lazarevic D."/>
            <person name="Lipovich L."/>
            <person name="Liu J."/>
            <person name="Liuni S."/>
            <person name="McWilliam S."/>
            <person name="Madan Babu M."/>
            <person name="Madera M."/>
            <person name="Marchionni L."/>
            <person name="Matsuda H."/>
            <person name="Matsuzawa S."/>
            <person name="Miki H."/>
            <person name="Mignone F."/>
            <person name="Miyake S."/>
            <person name="Morris K."/>
            <person name="Mottagui-Tabar S."/>
            <person name="Mulder N."/>
            <person name="Nakano N."/>
            <person name="Nakauchi H."/>
            <person name="Ng P."/>
            <person name="Nilsson R."/>
            <person name="Nishiguchi S."/>
            <person name="Nishikawa S."/>
            <person name="Nori F."/>
            <person name="Ohara O."/>
            <person name="Okazaki Y."/>
            <person name="Orlando V."/>
            <person name="Pang K.C."/>
            <person name="Pavan W.J."/>
            <person name="Pavesi G."/>
            <person name="Pesole G."/>
            <person name="Petrovsky N."/>
            <person name="Piazza S."/>
            <person name="Reed J."/>
            <person name="Reid J.F."/>
            <person name="Ring B.Z."/>
            <person name="Ringwald M."/>
            <person name="Rost B."/>
            <person name="Ruan Y."/>
            <person name="Salzberg S.L."/>
            <person name="Sandelin A."/>
            <person name="Schneider C."/>
            <person name="Schoenbach C."/>
            <person name="Sekiguchi K."/>
            <person name="Semple C.A."/>
            <person name="Seno S."/>
            <person name="Sessa L."/>
            <person name="Sheng Y."/>
            <person name="Shibata Y."/>
            <person name="Shimada H."/>
            <person name="Shimada K."/>
            <person name="Silva D."/>
            <person name="Sinclair B."/>
            <person name="Sperling S."/>
            <person name="Stupka E."/>
            <person name="Sugiura K."/>
            <person name="Sultana R."/>
            <person name="Takenaka Y."/>
            <person name="Taki K."/>
            <person name="Tammoja K."/>
            <person name="Tan S.L."/>
            <person name="Tang S."/>
            <person name="Taylor M.S."/>
            <person name="Tegner J."/>
            <person name="Teichmann S.A."/>
            <person name="Ueda H.R."/>
            <person name="van Nimwegen E."/>
            <person name="Verardo R."/>
            <person name="Wei C.L."/>
            <person name="Yagi K."/>
            <person name="Yamanishi H."/>
            <person name="Zabarovsky E."/>
            <person name="Zhu S."/>
            <person name="Zimmer A."/>
            <person name="Hide W."/>
            <person name="Bult C."/>
            <person name="Grimmond S.M."/>
            <person name="Teasdale R.D."/>
            <person name="Liu E.T."/>
            <person name="Brusic V."/>
            <person name="Quackenbush J."/>
            <person name="Wahlestedt C."/>
            <person name="Mattick J.S."/>
            <person name="Hume D.A."/>
            <person name="Kai C."/>
            <person name="Sasaki D."/>
            <person name="Tomaru Y."/>
            <person name="Fukuda S."/>
            <person name="Kanamori-Katayama M."/>
            <person name="Suzuki M."/>
            <person name="Aoki J."/>
            <person name="Arakawa T."/>
            <person name="Iida J."/>
            <person name="Imamura K."/>
            <person name="Itoh M."/>
            <person name="Kato T."/>
            <person name="Kawaji H."/>
            <person name="Kawagashira N."/>
            <person name="Kawashima T."/>
            <person name="Kojima M."/>
            <person name="Kondo S."/>
            <person name="Konno H."/>
            <person name="Nakano K."/>
            <person name="Ninomiya N."/>
            <person name="Nishio T."/>
            <person name="Okada M."/>
            <person name="Plessy C."/>
            <person name="Shibata K."/>
            <person name="Shiraki T."/>
            <person name="Suzuki S."/>
            <person name="Tagami M."/>
            <person name="Waki K."/>
            <person name="Watahiki A."/>
            <person name="Okamura-Oho Y."/>
            <person name="Suzuki H."/>
            <person name="Kawai J."/>
            <person name="Hayashizaki Y."/>
        </authorList>
    </citation>
    <scope>NUCLEOTIDE SEQUENCE [LARGE SCALE MRNA]</scope>
    <source>
        <strain>C57BL/6J</strain>
        <tissue>Embryo</tissue>
        <tissue>Embryonic head</tissue>
    </source>
</reference>
<reference key="2">
    <citation type="journal article" date="2004" name="Genome Res.">
        <title>The status, quality, and expansion of the NIH full-length cDNA project: the Mammalian Gene Collection (MGC).</title>
        <authorList>
            <consortium name="The MGC Project Team"/>
        </authorList>
    </citation>
    <scope>NUCLEOTIDE SEQUENCE [LARGE SCALE MRNA]</scope>
    <source>
        <strain>C57BL/6J</strain>
        <tissue>Mammary gland</tissue>
    </source>
</reference>
<reference key="3">
    <citation type="journal article" date="2016" name="Nature">
        <title>The peptidergic control circuit for sighing.</title>
        <authorList>
            <person name="Li P."/>
            <person name="Janczewski W.A."/>
            <person name="Yackle K."/>
            <person name="Kam K."/>
            <person name="Pagliardini S."/>
            <person name="Krasnow M.A."/>
            <person name="Feldman J.L."/>
        </authorList>
    </citation>
    <scope>FUNCTION</scope>
    <scope>SUBCELLULAR LOCATION</scope>
    <scope>TISSUE SPECIFICITY</scope>
</reference>
<reference key="4">
    <citation type="journal article" date="2017" name="Exp. Cell Res.">
        <title>Neuromedin B and its receptor silencing suppresses osteoclast generation by modulating precursor proliferation via M-CSF/c-Fms/D-type cyclins.</title>
        <authorList>
            <person name="Yeo C.E."/>
            <person name="Kang W.Y."/>
            <person name="Seong S.J."/>
            <person name="Cho S."/>
            <person name="Lee H.W."/>
            <person name="Yoon Y.R."/>
            <person name="Kim H.J."/>
        </authorList>
    </citation>
    <scope>FUNCTION</scope>
    <scope>DEVELOPMENTAL STAGE</scope>
</reference>
<reference key="5">
    <citation type="journal article" date="2019" name="Acta Derm. Venereol.">
        <title>Neuromedin B Induces Acute Itch in Mice via the Activation of Peripheral Sensory Neurons.</title>
        <authorList>
            <person name="Ehling S."/>
            <person name="Fukuyama T."/>
            <person name="Ko M.C."/>
            <person name="Olivry T."/>
            <person name="Baeumer W."/>
        </authorList>
    </citation>
    <scope>FUNCTION</scope>
</reference>
<reference key="6">
    <citation type="journal article" date="2019" name="Vet. Res.">
        <title>Role of neuromedin B and its receptor in the innate immune responses against influenza A virus infection in vitro and in vivo.</title>
        <authorList>
            <person name="Yang G."/>
            <person name="Huang H."/>
            <person name="Tang M."/>
            <person name="Cai Z."/>
            <person name="Huang C."/>
            <person name="Qi B."/>
            <person name="Chen J.L."/>
        </authorList>
    </citation>
    <scope>FUNCTION</scope>
    <scope>TISSUE SPECIFICITY</scope>
    <scope>INDUCTION</scope>
</reference>
<reference key="7">
    <citation type="journal article" date="2021" name="Cell">
        <title>Sneezing reflex is mediated by a peptidergic pathway from nose to brainstem.</title>
        <authorList>
            <person name="Li F."/>
            <person name="Jiang H."/>
            <person name="Shen X."/>
            <person name="Yang W."/>
            <person name="Guo C."/>
            <person name="Wang Z."/>
            <person name="Xiao M."/>
            <person name="Cui L."/>
            <person name="Luo W."/>
            <person name="Kim B.S."/>
            <person name="Chen Z."/>
            <person name="Huang A.J.W."/>
            <person name="Liu Q."/>
        </authorList>
    </citation>
    <scope>FUNCTION</scope>
    <scope>SUBCELLULAR LOCATION</scope>
    <scope>DISRUPTION PHENOTYPE</scope>
</reference>
<gene>
    <name type="primary">Nmb</name>
</gene>
<protein>
    <recommendedName>
        <fullName>Neuromedin-B</fullName>
    </recommendedName>
    <component>
        <recommendedName>
            <fullName>Neuromedin-B-32</fullName>
        </recommendedName>
    </component>
    <component>
        <recommendedName>
            <fullName>Neuromedin-B</fullName>
        </recommendedName>
    </component>
</protein>
<organism>
    <name type="scientific">Mus musculus</name>
    <name type="common">Mouse</name>
    <dbReference type="NCBI Taxonomy" id="10090"/>
    <lineage>
        <taxon>Eukaryota</taxon>
        <taxon>Metazoa</taxon>
        <taxon>Chordata</taxon>
        <taxon>Craniata</taxon>
        <taxon>Vertebrata</taxon>
        <taxon>Euteleostomi</taxon>
        <taxon>Mammalia</taxon>
        <taxon>Eutheria</taxon>
        <taxon>Euarchontoglires</taxon>
        <taxon>Glires</taxon>
        <taxon>Rodentia</taxon>
        <taxon>Myomorpha</taxon>
        <taxon>Muroidea</taxon>
        <taxon>Muridae</taxon>
        <taxon>Murinae</taxon>
        <taxon>Mus</taxon>
        <taxon>Mus</taxon>
    </lineage>
</organism>
<sequence>MTRQAGSSWLLRGLLLFALFASGVAPFNWDLPEPRSRASKIRVHPRGNLWATGHFMGKKSLEPPSLSLVGTAPPNTPRDQRLQLSHDLLRILLRKKALGMNFSGPAPPIQYRRLLEPLLQK</sequence>
<comment type="function">
    <text evidence="1 2 3 4 5 6">Stimulates smooth muscle contraction (By similarity). Induces sighing by acting directly on the pre-Botzinger complex, a cluster of several thousand neurons in the ventrolateral medulla responsible for inspiration during respiratory activity (PubMed:26855425). Contributes to the induction of sneezing following exposure to chemical irritants or allergens which causes release of NMB by nasal sensory neurons and activation of NMBR-expressing neurons in the sneeze-evoking region of the brainstem (PubMed:34133943). These in turn activate neurons of the caudal ventral respiratory group, giving rise to the sneeze reflex (PubMed:34133943). Contributes to induction of acute itch, possibly through activation of the NMBR receptor on dorsal root ganglion neurons (PubMed:30734045). Increases expression of NMBR and steroidogenic mediators STAR, CYP11A1 and HSD3B1 in Leydig cells, induces secretion of testosterone by Leydig cells and also promotes Leydig cell proliferation (By similarity). Plays a role in the innate immune response to influenza A virus infection by enhancing interferon alpha expression and reducing expression of IL6 (PubMed:31601264). Plays a role in CSF1-induced proliferation of osteoclast precursors by contributing to the positive regulation of the expression of the CSF1 receptor CSF1R (PubMed:28780306).</text>
</comment>
<comment type="subcellular location">
    <subcellularLocation>
        <location evidence="6">Secreted</location>
    </subcellularLocation>
    <subcellularLocation>
        <location evidence="2">Cell projection</location>
        <location evidence="2">Neuron projection</location>
    </subcellularLocation>
    <text evidence="2">In neurons of the retrotrapezoid nucleus//parafacial respiratory group, expressed on neuron projections which project into the pre-Botzinger complex.</text>
</comment>
<comment type="tissue specificity">
    <text evidence="2 5">In the hindbrain, expressed in the medulla surrounding the lateral half of the facial nucleus (PubMed:26855425). Also expressed in the olfactory bulb and hippocampus (PubMed:26855425). Detected in a subset of neurons distributed throughout the retrotrapezoid nucleus/parafacial respiratory group (RTN/pFRG) (PubMed:26855425). Within the RTN/pFRG, expressed in neuronal subpopulations distinct from those expressing Grp (PubMed:26855425). Expressed in lung (PubMed:31601264).</text>
</comment>
<comment type="developmental stage">
    <text evidence="3">During osteoclast development, expression increases as the cells differentiate with high expression levels in mature osteoclasts (at protein level).</text>
</comment>
<comment type="induction">
    <text evidence="5">Up-regulated in lung tissue in response to infection with influenza A virus.</text>
</comment>
<comment type="disruption phenotype">
    <text evidence="6">Significant reduction in the sneezing response to capsaicin at both low and high doses but does not affect pain-related nose wiping behavior or apnea induced by capsaicin (PubMed:34133943). Abolishes the sneezing response to histamine, seratonin and the neuropeptide Npff (PubMed:34133943). Abolishes sneezing response to mast cell-dependent allergy (PubMed:34133943).</text>
</comment>
<comment type="similarity">
    <text evidence="7">Belongs to the bombesin/neuromedin-B/ranatensin family.</text>
</comment>
<name>NMB_MOUSE</name>
<feature type="signal peptide" evidence="1">
    <location>
        <begin position="1"/>
        <end position="24"/>
    </location>
</feature>
<feature type="peptide" id="PRO_0000003020" description="Neuromedin-B-32" evidence="1">
    <location>
        <begin position="25"/>
        <end position="56"/>
    </location>
</feature>
<feature type="peptide" id="PRO_0000003021" description="Neuromedin-B" evidence="1">
    <location>
        <begin position="47"/>
        <end position="56"/>
    </location>
</feature>
<feature type="propeptide" id="PRO_0000003022" evidence="1">
    <location>
        <begin position="60"/>
        <end position="121"/>
    </location>
</feature>
<feature type="modified residue" description="Methionine amide" evidence="1">
    <location>
        <position position="56"/>
    </location>
</feature>